<proteinExistence type="inferred from homology"/>
<feature type="chain" id="PRO_1000125702" description="Glucose-6-phosphate isomerase">
    <location>
        <begin position="1"/>
        <end position="540"/>
    </location>
</feature>
<feature type="active site" description="Proton donor" evidence="1">
    <location>
        <position position="350"/>
    </location>
</feature>
<feature type="active site" evidence="1">
    <location>
        <position position="381"/>
    </location>
</feature>
<feature type="active site" evidence="1">
    <location>
        <position position="503"/>
    </location>
</feature>
<reference key="1">
    <citation type="submission" date="2007-10" db="EMBL/GenBank/DDBJ databases">
        <title>Complete sequence of chromosome 1 of Burkholderia multivorans ATCC 17616.</title>
        <authorList>
            <person name="Copeland A."/>
            <person name="Lucas S."/>
            <person name="Lapidus A."/>
            <person name="Barry K."/>
            <person name="Glavina del Rio T."/>
            <person name="Dalin E."/>
            <person name="Tice H."/>
            <person name="Pitluck S."/>
            <person name="Chain P."/>
            <person name="Malfatti S."/>
            <person name="Shin M."/>
            <person name="Vergez L."/>
            <person name="Schmutz J."/>
            <person name="Larimer F."/>
            <person name="Land M."/>
            <person name="Hauser L."/>
            <person name="Kyrpides N."/>
            <person name="Kim E."/>
            <person name="Tiedje J."/>
            <person name="Richardson P."/>
        </authorList>
    </citation>
    <scope>NUCLEOTIDE SEQUENCE [LARGE SCALE GENOMIC DNA]</scope>
    <source>
        <strain>ATCC 17616 / 249</strain>
    </source>
</reference>
<reference key="2">
    <citation type="submission" date="2007-04" db="EMBL/GenBank/DDBJ databases">
        <title>Complete genome sequence of Burkholderia multivorans ATCC 17616.</title>
        <authorList>
            <person name="Ohtsubo Y."/>
            <person name="Yamashita A."/>
            <person name="Kurokawa K."/>
            <person name="Takami H."/>
            <person name="Yuhara S."/>
            <person name="Nishiyama E."/>
            <person name="Endo R."/>
            <person name="Miyazaki R."/>
            <person name="Ono A."/>
            <person name="Yano K."/>
            <person name="Ito M."/>
            <person name="Sota M."/>
            <person name="Yuji N."/>
            <person name="Hattori M."/>
            <person name="Tsuda M."/>
        </authorList>
    </citation>
    <scope>NUCLEOTIDE SEQUENCE [LARGE SCALE GENOMIC DNA]</scope>
    <source>
        <strain>ATCC 17616 / 249</strain>
    </source>
</reference>
<dbReference type="EC" id="5.3.1.9" evidence="1"/>
<dbReference type="EMBL" id="CP000868">
    <property type="protein sequence ID" value="ABX15045.1"/>
    <property type="molecule type" value="Genomic_DNA"/>
</dbReference>
<dbReference type="EMBL" id="AP009385">
    <property type="protein sequence ID" value="BAG43806.1"/>
    <property type="molecule type" value="Genomic_DNA"/>
</dbReference>
<dbReference type="RefSeq" id="WP_012213192.1">
    <property type="nucleotide sequence ID" value="NC_010084.1"/>
</dbReference>
<dbReference type="SMR" id="A9AJR8"/>
<dbReference type="STRING" id="395019.BMULJ_01886"/>
<dbReference type="KEGG" id="bmj:BMULJ_01886"/>
<dbReference type="KEGG" id="bmu:Bmul_1357"/>
<dbReference type="eggNOG" id="COG0166">
    <property type="taxonomic scope" value="Bacteria"/>
</dbReference>
<dbReference type="HOGENOM" id="CLU_017947_3_1_4"/>
<dbReference type="UniPathway" id="UPA00109">
    <property type="reaction ID" value="UER00181"/>
</dbReference>
<dbReference type="UniPathway" id="UPA00138"/>
<dbReference type="Proteomes" id="UP000008815">
    <property type="component" value="Chromosome 1"/>
</dbReference>
<dbReference type="GO" id="GO:0005829">
    <property type="term" value="C:cytosol"/>
    <property type="evidence" value="ECO:0007669"/>
    <property type="project" value="TreeGrafter"/>
</dbReference>
<dbReference type="GO" id="GO:0097367">
    <property type="term" value="F:carbohydrate derivative binding"/>
    <property type="evidence" value="ECO:0007669"/>
    <property type="project" value="InterPro"/>
</dbReference>
<dbReference type="GO" id="GO:0004347">
    <property type="term" value="F:glucose-6-phosphate isomerase activity"/>
    <property type="evidence" value="ECO:0007669"/>
    <property type="project" value="UniProtKB-UniRule"/>
</dbReference>
<dbReference type="GO" id="GO:0048029">
    <property type="term" value="F:monosaccharide binding"/>
    <property type="evidence" value="ECO:0007669"/>
    <property type="project" value="TreeGrafter"/>
</dbReference>
<dbReference type="GO" id="GO:0006094">
    <property type="term" value="P:gluconeogenesis"/>
    <property type="evidence" value="ECO:0007669"/>
    <property type="project" value="UniProtKB-UniRule"/>
</dbReference>
<dbReference type="GO" id="GO:0051156">
    <property type="term" value="P:glucose 6-phosphate metabolic process"/>
    <property type="evidence" value="ECO:0007669"/>
    <property type="project" value="TreeGrafter"/>
</dbReference>
<dbReference type="GO" id="GO:0006096">
    <property type="term" value="P:glycolytic process"/>
    <property type="evidence" value="ECO:0007669"/>
    <property type="project" value="UniProtKB-UniRule"/>
</dbReference>
<dbReference type="CDD" id="cd05015">
    <property type="entry name" value="SIS_PGI_1"/>
    <property type="match status" value="1"/>
</dbReference>
<dbReference type="CDD" id="cd05016">
    <property type="entry name" value="SIS_PGI_2"/>
    <property type="match status" value="1"/>
</dbReference>
<dbReference type="Gene3D" id="1.10.1390.10">
    <property type="match status" value="1"/>
</dbReference>
<dbReference type="Gene3D" id="3.40.50.10490">
    <property type="entry name" value="Glucose-6-phosphate isomerase like protein, domain 1"/>
    <property type="match status" value="2"/>
</dbReference>
<dbReference type="HAMAP" id="MF_00473">
    <property type="entry name" value="G6P_isomerase"/>
    <property type="match status" value="1"/>
</dbReference>
<dbReference type="InterPro" id="IPR001672">
    <property type="entry name" value="G6P_Isomerase"/>
</dbReference>
<dbReference type="InterPro" id="IPR023096">
    <property type="entry name" value="G6P_Isomerase_C"/>
</dbReference>
<dbReference type="InterPro" id="IPR018189">
    <property type="entry name" value="Phosphoglucose_isomerase_CS"/>
</dbReference>
<dbReference type="InterPro" id="IPR046348">
    <property type="entry name" value="SIS_dom_sf"/>
</dbReference>
<dbReference type="InterPro" id="IPR035476">
    <property type="entry name" value="SIS_PGI_1"/>
</dbReference>
<dbReference type="InterPro" id="IPR035482">
    <property type="entry name" value="SIS_PGI_2"/>
</dbReference>
<dbReference type="NCBIfam" id="NF001211">
    <property type="entry name" value="PRK00179.1"/>
    <property type="match status" value="1"/>
</dbReference>
<dbReference type="PANTHER" id="PTHR11469">
    <property type="entry name" value="GLUCOSE-6-PHOSPHATE ISOMERASE"/>
    <property type="match status" value="1"/>
</dbReference>
<dbReference type="PANTHER" id="PTHR11469:SF1">
    <property type="entry name" value="GLUCOSE-6-PHOSPHATE ISOMERASE"/>
    <property type="match status" value="1"/>
</dbReference>
<dbReference type="Pfam" id="PF00342">
    <property type="entry name" value="PGI"/>
    <property type="match status" value="1"/>
</dbReference>
<dbReference type="PRINTS" id="PR00662">
    <property type="entry name" value="G6PISOMERASE"/>
</dbReference>
<dbReference type="SUPFAM" id="SSF53697">
    <property type="entry name" value="SIS domain"/>
    <property type="match status" value="1"/>
</dbReference>
<dbReference type="PROSITE" id="PS00765">
    <property type="entry name" value="P_GLUCOSE_ISOMERASE_1"/>
    <property type="match status" value="1"/>
</dbReference>
<dbReference type="PROSITE" id="PS00174">
    <property type="entry name" value="P_GLUCOSE_ISOMERASE_2"/>
    <property type="match status" value="1"/>
</dbReference>
<dbReference type="PROSITE" id="PS51463">
    <property type="entry name" value="P_GLUCOSE_ISOMERASE_3"/>
    <property type="match status" value="1"/>
</dbReference>
<keyword id="KW-0963">Cytoplasm</keyword>
<keyword id="KW-0312">Gluconeogenesis</keyword>
<keyword id="KW-0324">Glycolysis</keyword>
<keyword id="KW-0413">Isomerase</keyword>
<keyword id="KW-1185">Reference proteome</keyword>
<evidence type="ECO:0000255" key="1">
    <source>
        <dbReference type="HAMAP-Rule" id="MF_00473"/>
    </source>
</evidence>
<organism>
    <name type="scientific">Burkholderia multivorans (strain ATCC 17616 / 249)</name>
    <dbReference type="NCBI Taxonomy" id="395019"/>
    <lineage>
        <taxon>Bacteria</taxon>
        <taxon>Pseudomonadati</taxon>
        <taxon>Pseudomonadota</taxon>
        <taxon>Betaproteobacteria</taxon>
        <taxon>Burkholderiales</taxon>
        <taxon>Burkholderiaceae</taxon>
        <taxon>Burkholderia</taxon>
        <taxon>Burkholderia cepacia complex</taxon>
    </lineage>
</organism>
<accession>A9AJR8</accession>
<gene>
    <name evidence="1" type="primary">pgi</name>
    <name type="ordered locus">Bmul_1357</name>
    <name type="ordered locus">BMULJ_01886</name>
</gene>
<name>G6PI_BURM1</name>
<comment type="function">
    <text evidence="1">Catalyzes the reversible isomerization of glucose-6-phosphate to fructose-6-phosphate.</text>
</comment>
<comment type="catalytic activity">
    <reaction evidence="1">
        <text>alpha-D-glucose 6-phosphate = beta-D-fructose 6-phosphate</text>
        <dbReference type="Rhea" id="RHEA:11816"/>
        <dbReference type="ChEBI" id="CHEBI:57634"/>
        <dbReference type="ChEBI" id="CHEBI:58225"/>
        <dbReference type="EC" id="5.3.1.9"/>
    </reaction>
</comment>
<comment type="pathway">
    <text evidence="1">Carbohydrate biosynthesis; gluconeogenesis.</text>
</comment>
<comment type="pathway">
    <text evidence="1">Carbohydrate degradation; glycolysis; D-glyceraldehyde 3-phosphate and glycerone phosphate from D-glucose: step 2/4.</text>
</comment>
<comment type="subcellular location">
    <subcellularLocation>
        <location evidence="1">Cytoplasm</location>
    </subcellularLocation>
</comment>
<comment type="similarity">
    <text evidence="1">Belongs to the GPI family.</text>
</comment>
<protein>
    <recommendedName>
        <fullName evidence="1">Glucose-6-phosphate isomerase</fullName>
        <shortName evidence="1">GPI</shortName>
        <ecNumber evidence="1">5.3.1.9</ecNumber>
    </recommendedName>
    <alternativeName>
        <fullName evidence="1">Phosphoglucose isomerase</fullName>
        <shortName evidence="1">PGI</shortName>
    </alternativeName>
    <alternativeName>
        <fullName evidence="1">Phosphohexose isomerase</fullName>
        <shortName evidence="1">PHI</shortName>
    </alternativeName>
</protein>
<sequence length="540" mass="59399">MTLNSLPAWTALQSHFEQIRHARLRDWFAPQNDPAPTRAERFTFSGGGLAADFSKNRITDETLRLLVQLAREARVEARRDAMFAGEIVNPTEGRAALHTALRATDPHAPFHAQVSAERAKMATFARAVRNGTWTGHTGKRIRHVINIGIGGSDLGPKMVTHALRHVATRDISMHFVSNVDGADLARVLEQVDPEETLAIVVSKTFTTLETMTNARSLRDWFVAKGCPEDALAKHFVGVSANPAEVVKFGIAADNVFEMWDWVGGRYSLWSAVGLSIMIAIGPEQFDELLAGANDMDRHFREAPLERNLPVLLGLIGIWYRNFFGSQSYLVAPYSEALHYLPSYLQQLEMESNGKSARLDGRFVDYPTAAVTWGEPGTNGQHAFFQMLHQGPTIVPIDFIAVLTPEHPLASHHPKLLANCFAQSEALMLGRTLEEARKVAGPGKEDLAPHLTFPGNRPTTTLLVDALTPRSLGALIALYEHKVLVQATVWDINPFDQWGVELGKILGKVVEADLAADALDTAKHDSSTTALIARARAALKR</sequence>